<sequence length="94" mass="10261">MRIKPLGNRVVIKRLEAEEKTKSGIVLTGSAKEVPQEAEVVAVGPGSIVDGTKIEMEVKVGDKVLYSKYSGTEVKLDGEEYMILKQDDILAIVE</sequence>
<organism>
    <name type="scientific">Clostridium botulinum (strain Alaska E43 / Type E3)</name>
    <dbReference type="NCBI Taxonomy" id="508767"/>
    <lineage>
        <taxon>Bacteria</taxon>
        <taxon>Bacillati</taxon>
        <taxon>Bacillota</taxon>
        <taxon>Clostridia</taxon>
        <taxon>Eubacteriales</taxon>
        <taxon>Clostridiaceae</taxon>
        <taxon>Clostridium</taxon>
    </lineage>
</organism>
<dbReference type="EMBL" id="CP001078">
    <property type="protein sequence ID" value="ACD53257.1"/>
    <property type="molecule type" value="Genomic_DNA"/>
</dbReference>
<dbReference type="RefSeq" id="WP_003373402.1">
    <property type="nucleotide sequence ID" value="NC_010723.1"/>
</dbReference>
<dbReference type="SMR" id="B2UZ01"/>
<dbReference type="KEGG" id="cbt:CLH_0373"/>
<dbReference type="HOGENOM" id="CLU_132825_2_0_9"/>
<dbReference type="GO" id="GO:0005737">
    <property type="term" value="C:cytoplasm"/>
    <property type="evidence" value="ECO:0007669"/>
    <property type="project" value="UniProtKB-SubCell"/>
</dbReference>
<dbReference type="GO" id="GO:0005524">
    <property type="term" value="F:ATP binding"/>
    <property type="evidence" value="ECO:0007669"/>
    <property type="project" value="InterPro"/>
</dbReference>
<dbReference type="GO" id="GO:0046872">
    <property type="term" value="F:metal ion binding"/>
    <property type="evidence" value="ECO:0007669"/>
    <property type="project" value="TreeGrafter"/>
</dbReference>
<dbReference type="GO" id="GO:0044183">
    <property type="term" value="F:protein folding chaperone"/>
    <property type="evidence" value="ECO:0007669"/>
    <property type="project" value="InterPro"/>
</dbReference>
<dbReference type="GO" id="GO:0051087">
    <property type="term" value="F:protein-folding chaperone binding"/>
    <property type="evidence" value="ECO:0007669"/>
    <property type="project" value="TreeGrafter"/>
</dbReference>
<dbReference type="GO" id="GO:0051082">
    <property type="term" value="F:unfolded protein binding"/>
    <property type="evidence" value="ECO:0007669"/>
    <property type="project" value="TreeGrafter"/>
</dbReference>
<dbReference type="GO" id="GO:0051085">
    <property type="term" value="P:chaperone cofactor-dependent protein refolding"/>
    <property type="evidence" value="ECO:0007669"/>
    <property type="project" value="TreeGrafter"/>
</dbReference>
<dbReference type="CDD" id="cd00320">
    <property type="entry name" value="cpn10"/>
    <property type="match status" value="1"/>
</dbReference>
<dbReference type="FunFam" id="2.30.33.40:FF:000001">
    <property type="entry name" value="10 kDa chaperonin"/>
    <property type="match status" value="1"/>
</dbReference>
<dbReference type="Gene3D" id="2.30.33.40">
    <property type="entry name" value="GroES chaperonin"/>
    <property type="match status" value="1"/>
</dbReference>
<dbReference type="HAMAP" id="MF_00580">
    <property type="entry name" value="CH10"/>
    <property type="match status" value="1"/>
</dbReference>
<dbReference type="InterPro" id="IPR020818">
    <property type="entry name" value="Chaperonin_GroES"/>
</dbReference>
<dbReference type="InterPro" id="IPR037124">
    <property type="entry name" value="Chaperonin_GroES_sf"/>
</dbReference>
<dbReference type="InterPro" id="IPR018369">
    <property type="entry name" value="Chaprnonin_Cpn10_CS"/>
</dbReference>
<dbReference type="InterPro" id="IPR011032">
    <property type="entry name" value="GroES-like_sf"/>
</dbReference>
<dbReference type="NCBIfam" id="NF001531">
    <property type="entry name" value="PRK00364.2-2"/>
    <property type="match status" value="1"/>
</dbReference>
<dbReference type="NCBIfam" id="NF001533">
    <property type="entry name" value="PRK00364.2-4"/>
    <property type="match status" value="1"/>
</dbReference>
<dbReference type="NCBIfam" id="NF001534">
    <property type="entry name" value="PRK00364.2-5"/>
    <property type="match status" value="1"/>
</dbReference>
<dbReference type="PANTHER" id="PTHR10772">
    <property type="entry name" value="10 KDA HEAT SHOCK PROTEIN"/>
    <property type="match status" value="1"/>
</dbReference>
<dbReference type="PANTHER" id="PTHR10772:SF58">
    <property type="entry name" value="CO-CHAPERONIN GROES"/>
    <property type="match status" value="1"/>
</dbReference>
<dbReference type="Pfam" id="PF00166">
    <property type="entry name" value="Cpn10"/>
    <property type="match status" value="1"/>
</dbReference>
<dbReference type="PRINTS" id="PR00297">
    <property type="entry name" value="CHAPERONIN10"/>
</dbReference>
<dbReference type="SMART" id="SM00883">
    <property type="entry name" value="Cpn10"/>
    <property type="match status" value="1"/>
</dbReference>
<dbReference type="SUPFAM" id="SSF50129">
    <property type="entry name" value="GroES-like"/>
    <property type="match status" value="1"/>
</dbReference>
<dbReference type="PROSITE" id="PS00681">
    <property type="entry name" value="CHAPERONINS_CPN10"/>
    <property type="match status" value="1"/>
</dbReference>
<gene>
    <name evidence="1" type="primary">groES</name>
    <name evidence="1" type="synonym">groS</name>
    <name type="ordered locus">CLH_0373</name>
</gene>
<evidence type="ECO:0000255" key="1">
    <source>
        <dbReference type="HAMAP-Rule" id="MF_00580"/>
    </source>
</evidence>
<reference key="1">
    <citation type="submission" date="2008-05" db="EMBL/GenBank/DDBJ databases">
        <title>Complete genome sequence of Clostridium botulinum E3 str. Alaska E43.</title>
        <authorList>
            <person name="Brinkac L.M."/>
            <person name="Brown J.L."/>
            <person name="Bruce D."/>
            <person name="Detter C."/>
            <person name="Munk C."/>
            <person name="Smith L.A."/>
            <person name="Smith T.J."/>
            <person name="Sutton G."/>
            <person name="Brettin T.S."/>
        </authorList>
    </citation>
    <scope>NUCLEOTIDE SEQUENCE [LARGE SCALE GENOMIC DNA]</scope>
    <source>
        <strain>Alaska E43 / Type E3</strain>
    </source>
</reference>
<feature type="chain" id="PRO_1000129640" description="Co-chaperonin GroES">
    <location>
        <begin position="1"/>
        <end position="94"/>
    </location>
</feature>
<proteinExistence type="inferred from homology"/>
<accession>B2UZ01</accession>
<keyword id="KW-0143">Chaperone</keyword>
<keyword id="KW-0963">Cytoplasm</keyword>
<comment type="function">
    <text evidence="1">Together with the chaperonin GroEL, plays an essential role in assisting protein folding. The GroEL-GroES system forms a nano-cage that allows encapsulation of the non-native substrate proteins and provides a physical environment optimized to promote and accelerate protein folding. GroES binds to the apical surface of the GroEL ring, thereby capping the opening of the GroEL channel.</text>
</comment>
<comment type="subunit">
    <text evidence="1">Heptamer of 7 subunits arranged in a ring. Interacts with the chaperonin GroEL.</text>
</comment>
<comment type="subcellular location">
    <subcellularLocation>
        <location evidence="1">Cytoplasm</location>
    </subcellularLocation>
</comment>
<comment type="similarity">
    <text evidence="1">Belongs to the GroES chaperonin family.</text>
</comment>
<name>CH10_CLOBA</name>
<protein>
    <recommendedName>
        <fullName evidence="1">Co-chaperonin GroES</fullName>
    </recommendedName>
    <alternativeName>
        <fullName evidence="1">10 kDa chaperonin</fullName>
    </alternativeName>
    <alternativeName>
        <fullName evidence="1">Chaperonin-10</fullName>
        <shortName evidence="1">Cpn10</shortName>
    </alternativeName>
</protein>